<organism>
    <name type="scientific">Deropeltis integerrima</name>
    <name type="common">Cockroach</name>
    <name type="synonym">Deropeltis cf. schweinfurthii (strain SR-2005)</name>
    <dbReference type="NCBI Taxonomy" id="596121"/>
    <lineage>
        <taxon>Eukaryota</taxon>
        <taxon>Metazoa</taxon>
        <taxon>Ecdysozoa</taxon>
        <taxon>Arthropoda</taxon>
        <taxon>Hexapoda</taxon>
        <taxon>Insecta</taxon>
        <taxon>Pterygota</taxon>
        <taxon>Neoptera</taxon>
        <taxon>Polyneoptera</taxon>
        <taxon>Dictyoptera</taxon>
        <taxon>Blattodea</taxon>
        <taxon>Blattoidea</taxon>
        <taxon>Blattidae</taxon>
        <taxon>Blattinae</taxon>
        <taxon>Deropeltis</taxon>
    </lineage>
</organism>
<protein>
    <recommendedName>
        <fullName evidence="3">Periviscerokinin-3</fullName>
        <shortName evidence="3">DerIn-PVK-3</shortName>
    </recommendedName>
</protein>
<evidence type="ECO:0000255" key="1"/>
<evidence type="ECO:0000269" key="2">
    <source>
    </source>
</evidence>
<evidence type="ECO:0000303" key="3">
    <source>
    </source>
</evidence>
<evidence type="ECO:0000305" key="4"/>
<name>PVK3_DERIN</name>
<dbReference type="GO" id="GO:0005576">
    <property type="term" value="C:extracellular region"/>
    <property type="evidence" value="ECO:0007669"/>
    <property type="project" value="UniProtKB-SubCell"/>
</dbReference>
<dbReference type="GO" id="GO:0007218">
    <property type="term" value="P:neuropeptide signaling pathway"/>
    <property type="evidence" value="ECO:0007669"/>
    <property type="project" value="UniProtKB-KW"/>
</dbReference>
<dbReference type="InterPro" id="IPR013231">
    <property type="entry name" value="Periviscerokinin"/>
</dbReference>
<dbReference type="Pfam" id="PF08259">
    <property type="entry name" value="Periviscerokin"/>
    <property type="match status" value="1"/>
</dbReference>
<reference evidence="4" key="1">
    <citation type="journal article" date="2009" name="BMC Evol. Biol.">
        <title>A proteomic approach for studying insect phylogeny: CAPA peptides of ancient insect taxa (Dictyoptera, Blattoptera) as a test case.</title>
        <authorList>
            <person name="Roth S."/>
            <person name="Fromm B."/>
            <person name="Gaede G."/>
            <person name="Predel R."/>
        </authorList>
    </citation>
    <scope>PROTEIN SEQUENCE</scope>
    <scope>AMIDATION AT VAL-12</scope>
    <source>
        <tissue evidence="2">Abdominal perisympathetic organs</tissue>
    </source>
</reference>
<keyword id="KW-0027">Amidation</keyword>
<keyword id="KW-0903">Direct protein sequencing</keyword>
<keyword id="KW-0527">Neuropeptide</keyword>
<keyword id="KW-0964">Secreted</keyword>
<accession>P85589</accession>
<sequence length="12" mass="1160">GGSSGLISMPRV</sequence>
<comment type="function">
    <text evidence="4">Mediates visceral muscle contractile activity (myotropic activity).</text>
</comment>
<comment type="subcellular location">
    <subcellularLocation>
        <location evidence="4">Secreted</location>
    </subcellularLocation>
</comment>
<comment type="similarity">
    <text evidence="1">Belongs to the periviscerokinin family.</text>
</comment>
<feature type="peptide" id="PRO_0000378826" description="Periviscerokinin-3" evidence="2">
    <location>
        <begin position="1"/>
        <end position="12"/>
    </location>
</feature>
<feature type="modified residue" description="Valine amide" evidence="2">
    <location>
        <position position="12"/>
    </location>
</feature>
<proteinExistence type="evidence at protein level"/>